<organism>
    <name type="scientific">Leptothrix cholodnii (strain ATCC 51168 / LMG 8142 / SP-6)</name>
    <name type="common">Leptothrix discophora (strain SP-6)</name>
    <dbReference type="NCBI Taxonomy" id="395495"/>
    <lineage>
        <taxon>Bacteria</taxon>
        <taxon>Pseudomonadati</taxon>
        <taxon>Pseudomonadota</taxon>
        <taxon>Betaproteobacteria</taxon>
        <taxon>Burkholderiales</taxon>
        <taxon>Sphaerotilaceae</taxon>
        <taxon>Leptothrix</taxon>
    </lineage>
</organism>
<feature type="chain" id="PRO_1000193858" description="Large ribosomal subunit protein bL19">
    <location>
        <begin position="1"/>
        <end position="117"/>
    </location>
</feature>
<name>RL19_LEPCP</name>
<evidence type="ECO:0000255" key="1">
    <source>
        <dbReference type="HAMAP-Rule" id="MF_00402"/>
    </source>
</evidence>
<evidence type="ECO:0000305" key="2"/>
<proteinExistence type="inferred from homology"/>
<accession>B1Y0H8</accession>
<sequence>MDLIQQLEQEEIARLNKVIPVFAPGDTVIVSVNVVEGTRKRLQAYEGVVIAKRNRGLNSSFIVRKISSGEGVERTFQLYSPLIASIEVKRRGDVRRAKLYYLRQRSGKSARIKEKLS</sequence>
<protein>
    <recommendedName>
        <fullName evidence="1">Large ribosomal subunit protein bL19</fullName>
    </recommendedName>
    <alternativeName>
        <fullName evidence="2">50S ribosomal protein L19</fullName>
    </alternativeName>
</protein>
<reference key="1">
    <citation type="submission" date="2008-03" db="EMBL/GenBank/DDBJ databases">
        <title>Complete sequence of Leptothrix cholodnii SP-6.</title>
        <authorList>
            <consortium name="US DOE Joint Genome Institute"/>
            <person name="Copeland A."/>
            <person name="Lucas S."/>
            <person name="Lapidus A."/>
            <person name="Glavina del Rio T."/>
            <person name="Dalin E."/>
            <person name="Tice H."/>
            <person name="Bruce D."/>
            <person name="Goodwin L."/>
            <person name="Pitluck S."/>
            <person name="Chertkov O."/>
            <person name="Brettin T."/>
            <person name="Detter J.C."/>
            <person name="Han C."/>
            <person name="Kuske C.R."/>
            <person name="Schmutz J."/>
            <person name="Larimer F."/>
            <person name="Land M."/>
            <person name="Hauser L."/>
            <person name="Kyrpides N."/>
            <person name="Lykidis A."/>
            <person name="Emerson D."/>
            <person name="Richardson P."/>
        </authorList>
    </citation>
    <scope>NUCLEOTIDE SEQUENCE [LARGE SCALE GENOMIC DNA]</scope>
    <source>
        <strain>ATCC 51168 / LMG 8142 / SP-6</strain>
    </source>
</reference>
<dbReference type="EMBL" id="CP001013">
    <property type="protein sequence ID" value="ACB32959.1"/>
    <property type="molecule type" value="Genomic_DNA"/>
</dbReference>
<dbReference type="RefSeq" id="WP_012345721.1">
    <property type="nucleotide sequence ID" value="NC_010524.1"/>
</dbReference>
<dbReference type="SMR" id="B1Y0H8"/>
<dbReference type="STRING" id="395495.Lcho_0684"/>
<dbReference type="KEGG" id="lch:Lcho_0684"/>
<dbReference type="eggNOG" id="COG0335">
    <property type="taxonomic scope" value="Bacteria"/>
</dbReference>
<dbReference type="HOGENOM" id="CLU_103507_1_0_4"/>
<dbReference type="OrthoDB" id="9803541at2"/>
<dbReference type="Proteomes" id="UP000001693">
    <property type="component" value="Chromosome"/>
</dbReference>
<dbReference type="GO" id="GO:0022625">
    <property type="term" value="C:cytosolic large ribosomal subunit"/>
    <property type="evidence" value="ECO:0007669"/>
    <property type="project" value="TreeGrafter"/>
</dbReference>
<dbReference type="GO" id="GO:0003735">
    <property type="term" value="F:structural constituent of ribosome"/>
    <property type="evidence" value="ECO:0007669"/>
    <property type="project" value="InterPro"/>
</dbReference>
<dbReference type="GO" id="GO:0006412">
    <property type="term" value="P:translation"/>
    <property type="evidence" value="ECO:0007669"/>
    <property type="project" value="UniProtKB-UniRule"/>
</dbReference>
<dbReference type="FunFam" id="2.30.30.790:FF:000001">
    <property type="entry name" value="50S ribosomal protein L19"/>
    <property type="match status" value="1"/>
</dbReference>
<dbReference type="Gene3D" id="2.30.30.790">
    <property type="match status" value="1"/>
</dbReference>
<dbReference type="HAMAP" id="MF_00402">
    <property type="entry name" value="Ribosomal_bL19"/>
    <property type="match status" value="1"/>
</dbReference>
<dbReference type="InterPro" id="IPR001857">
    <property type="entry name" value="Ribosomal_bL19"/>
</dbReference>
<dbReference type="InterPro" id="IPR018257">
    <property type="entry name" value="Ribosomal_bL19_CS"/>
</dbReference>
<dbReference type="InterPro" id="IPR038657">
    <property type="entry name" value="Ribosomal_bL19_sf"/>
</dbReference>
<dbReference type="InterPro" id="IPR008991">
    <property type="entry name" value="Translation_prot_SH3-like_sf"/>
</dbReference>
<dbReference type="NCBIfam" id="TIGR01024">
    <property type="entry name" value="rplS_bact"/>
    <property type="match status" value="1"/>
</dbReference>
<dbReference type="PANTHER" id="PTHR15680:SF9">
    <property type="entry name" value="LARGE RIBOSOMAL SUBUNIT PROTEIN BL19M"/>
    <property type="match status" value="1"/>
</dbReference>
<dbReference type="PANTHER" id="PTHR15680">
    <property type="entry name" value="RIBOSOMAL PROTEIN L19"/>
    <property type="match status" value="1"/>
</dbReference>
<dbReference type="Pfam" id="PF01245">
    <property type="entry name" value="Ribosomal_L19"/>
    <property type="match status" value="1"/>
</dbReference>
<dbReference type="PIRSF" id="PIRSF002191">
    <property type="entry name" value="Ribosomal_L19"/>
    <property type="match status" value="1"/>
</dbReference>
<dbReference type="PRINTS" id="PR00061">
    <property type="entry name" value="RIBOSOMALL19"/>
</dbReference>
<dbReference type="SUPFAM" id="SSF50104">
    <property type="entry name" value="Translation proteins SH3-like domain"/>
    <property type="match status" value="1"/>
</dbReference>
<dbReference type="PROSITE" id="PS01015">
    <property type="entry name" value="RIBOSOMAL_L19"/>
    <property type="match status" value="1"/>
</dbReference>
<gene>
    <name evidence="1" type="primary">rplS</name>
    <name type="ordered locus">Lcho_0684</name>
</gene>
<comment type="function">
    <text evidence="1">This protein is located at the 30S-50S ribosomal subunit interface and may play a role in the structure and function of the aminoacyl-tRNA binding site.</text>
</comment>
<comment type="similarity">
    <text evidence="1">Belongs to the bacterial ribosomal protein bL19 family.</text>
</comment>
<keyword id="KW-1185">Reference proteome</keyword>
<keyword id="KW-0687">Ribonucleoprotein</keyword>
<keyword id="KW-0689">Ribosomal protein</keyword>